<feature type="chain" id="PRO_1000149853" description="Diphthine synthase">
    <location>
        <begin position="1"/>
        <end position="265"/>
    </location>
</feature>
<feature type="binding site" evidence="1">
    <location>
        <position position="9"/>
    </location>
    <ligand>
        <name>S-adenosyl-L-methionine</name>
        <dbReference type="ChEBI" id="CHEBI:59789"/>
    </ligand>
</feature>
<feature type="binding site" evidence="1">
    <location>
        <position position="85"/>
    </location>
    <ligand>
        <name>S-adenosyl-L-methionine</name>
        <dbReference type="ChEBI" id="CHEBI:59789"/>
    </ligand>
</feature>
<feature type="binding site" evidence="1">
    <location>
        <position position="88"/>
    </location>
    <ligand>
        <name>S-adenosyl-L-methionine</name>
        <dbReference type="ChEBI" id="CHEBI:59789"/>
    </ligand>
</feature>
<feature type="binding site" evidence="1">
    <location>
        <begin position="113"/>
        <end position="114"/>
    </location>
    <ligand>
        <name>S-adenosyl-L-methionine</name>
        <dbReference type="ChEBI" id="CHEBI:59789"/>
    </ligand>
</feature>
<feature type="binding site" evidence="1">
    <location>
        <position position="168"/>
    </location>
    <ligand>
        <name>S-adenosyl-L-methionine</name>
        <dbReference type="ChEBI" id="CHEBI:59789"/>
    </ligand>
</feature>
<feature type="binding site" evidence="1">
    <location>
        <position position="211"/>
    </location>
    <ligand>
        <name>S-adenosyl-L-methionine</name>
        <dbReference type="ChEBI" id="CHEBI:59789"/>
    </ligand>
</feature>
<feature type="binding site" evidence="1">
    <location>
        <position position="236"/>
    </location>
    <ligand>
        <name>S-adenosyl-L-methionine</name>
        <dbReference type="ChEBI" id="CHEBI:59789"/>
    </ligand>
</feature>
<keyword id="KW-0489">Methyltransferase</keyword>
<keyword id="KW-1185">Reference proteome</keyword>
<keyword id="KW-0949">S-adenosyl-L-methionine</keyword>
<keyword id="KW-0808">Transferase</keyword>
<comment type="function">
    <text evidence="1">S-adenosyl-L-methionine-dependent methyltransferase that catalyzes the trimethylation of the amino group of the modified target histidine residue in translation elongation factor 2 (EF-2), to form an intermediate called diphthine. The three successive methylation reactions represent the second step of diphthamide biosynthesis.</text>
</comment>
<comment type="catalytic activity">
    <reaction evidence="1">
        <text>2-[(3S)-amino-3-carboxypropyl]-L-histidyl-[translation elongation factor 2] + 3 S-adenosyl-L-methionine = diphthine-[translation elongation factor 2] + 3 S-adenosyl-L-homocysteine + 3 H(+)</text>
        <dbReference type="Rhea" id="RHEA:36415"/>
        <dbReference type="Rhea" id="RHEA-COMP:9749"/>
        <dbReference type="Rhea" id="RHEA-COMP:10172"/>
        <dbReference type="ChEBI" id="CHEBI:15378"/>
        <dbReference type="ChEBI" id="CHEBI:57856"/>
        <dbReference type="ChEBI" id="CHEBI:59789"/>
        <dbReference type="ChEBI" id="CHEBI:73995"/>
        <dbReference type="ChEBI" id="CHEBI:82696"/>
        <dbReference type="EC" id="2.1.1.98"/>
    </reaction>
</comment>
<comment type="pathway">
    <text evidence="1">Protein modification; peptidyl-diphthamide biosynthesis.</text>
</comment>
<comment type="subunit">
    <text evidence="1">Homodimer.</text>
</comment>
<comment type="similarity">
    <text evidence="1">Belongs to the diphthine synthase family.</text>
</comment>
<name>DPHB_HALLT</name>
<proteinExistence type="inferred from homology"/>
<sequence>MLTFIGLGLYDERSITVEGREALRSADRVFAEFYTSRLVGADVDDLEAYHDTEIEVRAREGVEQDPEAILAAAEDGHTAFLTAGDTMISTTHTDLRLRAEERGIDTRVIHGVTAQSAASSLTGLQNYRFGKATTLPFPYAHGGDDVPGSVIDTIEANRERGLHTVVYLDIKVGTGPTGPDPDHEEYMTADVAAGLLADGWEDALAVVVARAGSPDAVVAADRLSALADREFGDPLHLLVIPGDLHHVEADALVGLAGAPAELVEE</sequence>
<gene>
    <name evidence="1" type="primary">dphB</name>
    <name type="ordered locus">Hlac_0892</name>
</gene>
<reference key="1">
    <citation type="journal article" date="2016" name="Stand. Genomic Sci.">
        <title>Complete genome sequence of the Antarctic Halorubrum lacusprofundi type strain ACAM 34.</title>
        <authorList>
            <person name="Anderson I.J."/>
            <person name="DasSarma P."/>
            <person name="Lucas S."/>
            <person name="Copeland A."/>
            <person name="Lapidus A."/>
            <person name="Del Rio T.G."/>
            <person name="Tice H."/>
            <person name="Dalin E."/>
            <person name="Bruce D.C."/>
            <person name="Goodwin L."/>
            <person name="Pitluck S."/>
            <person name="Sims D."/>
            <person name="Brettin T.S."/>
            <person name="Detter J.C."/>
            <person name="Han C.S."/>
            <person name="Larimer F."/>
            <person name="Hauser L."/>
            <person name="Land M."/>
            <person name="Ivanova N."/>
            <person name="Richardson P."/>
            <person name="Cavicchioli R."/>
            <person name="DasSarma S."/>
            <person name="Woese C.R."/>
            <person name="Kyrpides N.C."/>
        </authorList>
    </citation>
    <scope>NUCLEOTIDE SEQUENCE [LARGE SCALE GENOMIC DNA]</scope>
    <source>
        <strain>ATCC 49239 / DSM 5036 / JCM 8891 / ACAM 34</strain>
    </source>
</reference>
<organism>
    <name type="scientific">Halorubrum lacusprofundi (strain ATCC 49239 / DSM 5036 / JCM 8891 / ACAM 34)</name>
    <dbReference type="NCBI Taxonomy" id="416348"/>
    <lineage>
        <taxon>Archaea</taxon>
        <taxon>Methanobacteriati</taxon>
        <taxon>Methanobacteriota</taxon>
        <taxon>Stenosarchaea group</taxon>
        <taxon>Halobacteria</taxon>
        <taxon>Halobacteriales</taxon>
        <taxon>Haloferacaceae</taxon>
        <taxon>Halorubrum</taxon>
    </lineage>
</organism>
<evidence type="ECO:0000255" key="1">
    <source>
        <dbReference type="HAMAP-Rule" id="MF_01084"/>
    </source>
</evidence>
<protein>
    <recommendedName>
        <fullName evidence="1">Diphthine synthase</fullName>
        <ecNumber evidence="1">2.1.1.98</ecNumber>
    </recommendedName>
    <alternativeName>
        <fullName evidence="1">Diphthamide biosynthesis methyltransferase</fullName>
    </alternativeName>
</protein>
<accession>B9LV13</accession>
<dbReference type="EC" id="2.1.1.98" evidence="1"/>
<dbReference type="EMBL" id="CP001365">
    <property type="protein sequence ID" value="ACM56490.1"/>
    <property type="molecule type" value="Genomic_DNA"/>
</dbReference>
<dbReference type="RefSeq" id="WP_015909641.1">
    <property type="nucleotide sequence ID" value="NC_012029.1"/>
</dbReference>
<dbReference type="SMR" id="B9LV13"/>
<dbReference type="GeneID" id="7401263"/>
<dbReference type="KEGG" id="hla:Hlac_0892"/>
<dbReference type="eggNOG" id="arCOG04161">
    <property type="taxonomic scope" value="Archaea"/>
</dbReference>
<dbReference type="HOGENOM" id="CLU_066040_0_0_2"/>
<dbReference type="UniPathway" id="UPA00559"/>
<dbReference type="Proteomes" id="UP000000740">
    <property type="component" value="Chromosome 1"/>
</dbReference>
<dbReference type="GO" id="GO:0004164">
    <property type="term" value="F:diphthine synthase activity"/>
    <property type="evidence" value="ECO:0007669"/>
    <property type="project" value="UniProtKB-UniRule"/>
</dbReference>
<dbReference type="GO" id="GO:0032259">
    <property type="term" value="P:methylation"/>
    <property type="evidence" value="ECO:0007669"/>
    <property type="project" value="UniProtKB-KW"/>
</dbReference>
<dbReference type="GO" id="GO:0017183">
    <property type="term" value="P:protein histidyl modification to diphthamide"/>
    <property type="evidence" value="ECO:0007669"/>
    <property type="project" value="UniProtKB-UniRule"/>
</dbReference>
<dbReference type="CDD" id="cd11647">
    <property type="entry name" value="DHP5_DphB"/>
    <property type="match status" value="1"/>
</dbReference>
<dbReference type="Gene3D" id="3.40.1010.10">
    <property type="entry name" value="Cobalt-precorrin-4 Transmethylase, Domain 1"/>
    <property type="match status" value="1"/>
</dbReference>
<dbReference type="Gene3D" id="3.30.950.10">
    <property type="entry name" value="Methyltransferase, Cobalt-precorrin-4 Transmethylase, Domain 2"/>
    <property type="match status" value="1"/>
</dbReference>
<dbReference type="HAMAP" id="MF_01084">
    <property type="entry name" value="Diphthine_synth"/>
    <property type="match status" value="1"/>
</dbReference>
<dbReference type="InterPro" id="IPR000878">
    <property type="entry name" value="4pyrrol_Mease"/>
</dbReference>
<dbReference type="InterPro" id="IPR035996">
    <property type="entry name" value="4pyrrol_Methylase_sf"/>
</dbReference>
<dbReference type="InterPro" id="IPR014777">
    <property type="entry name" value="4pyrrole_Mease_sub1"/>
</dbReference>
<dbReference type="InterPro" id="IPR014776">
    <property type="entry name" value="4pyrrole_Mease_sub2"/>
</dbReference>
<dbReference type="InterPro" id="IPR004551">
    <property type="entry name" value="Dphthn_synthase"/>
</dbReference>
<dbReference type="NCBIfam" id="TIGR00522">
    <property type="entry name" value="dph5"/>
    <property type="match status" value="1"/>
</dbReference>
<dbReference type="PANTHER" id="PTHR10882:SF0">
    <property type="entry name" value="DIPHTHINE METHYL ESTER SYNTHASE"/>
    <property type="match status" value="1"/>
</dbReference>
<dbReference type="PANTHER" id="PTHR10882">
    <property type="entry name" value="DIPHTHINE SYNTHASE"/>
    <property type="match status" value="1"/>
</dbReference>
<dbReference type="Pfam" id="PF00590">
    <property type="entry name" value="TP_methylase"/>
    <property type="match status" value="1"/>
</dbReference>
<dbReference type="PIRSF" id="PIRSF036432">
    <property type="entry name" value="Diphthine_synth"/>
    <property type="match status" value="1"/>
</dbReference>
<dbReference type="SUPFAM" id="SSF53790">
    <property type="entry name" value="Tetrapyrrole methylase"/>
    <property type="match status" value="1"/>
</dbReference>